<comment type="function">
    <text evidence="2 3">In muscle, parvalbumin is thought to be involved in relaxation after contraction. It binds two calcium ions (By similarity).</text>
</comment>
<comment type="mass spectrometry"/>
<comment type="miscellaneous">
    <text evidence="2 6">Is regarded as an important allergen.</text>
</comment>
<comment type="miscellaneous">
    <text evidence="6">On the 2D-gel the determined pI of this protein is: 4.19, its MW is: 11.35 kDa.</text>
</comment>
<comment type="similarity">
    <text evidence="4">Belongs to the parvalbumin family.</text>
</comment>
<evidence type="ECO:0000250" key="1">
    <source>
        <dbReference type="UniProtKB" id="P02621"/>
    </source>
</evidence>
<evidence type="ECO:0000250" key="2">
    <source>
        <dbReference type="UniProtKB" id="P02622"/>
    </source>
</evidence>
<evidence type="ECO:0000250" key="3">
    <source>
        <dbReference type="UniProtKB" id="P02624"/>
    </source>
</evidence>
<evidence type="ECO:0000255" key="4"/>
<evidence type="ECO:0000255" key="5">
    <source>
        <dbReference type="PROSITE-ProRule" id="PRU00448"/>
    </source>
</evidence>
<evidence type="ECO:0000269" key="6">
    <source>
    </source>
</evidence>
<evidence type="ECO:0000303" key="7">
    <source>
    </source>
</evidence>
<evidence type="ECO:0000305" key="8"/>
<organism>
    <name type="scientific">Merluccius polli</name>
    <name type="common">Benguela hake</name>
    <name type="synonym">Merluccius cadenati</name>
    <dbReference type="NCBI Taxonomy" id="89951"/>
    <lineage>
        <taxon>Eukaryota</taxon>
        <taxon>Metazoa</taxon>
        <taxon>Chordata</taxon>
        <taxon>Craniata</taxon>
        <taxon>Vertebrata</taxon>
        <taxon>Euteleostomi</taxon>
        <taxon>Actinopterygii</taxon>
        <taxon>Neopterygii</taxon>
        <taxon>Teleostei</taxon>
        <taxon>Neoteleostei</taxon>
        <taxon>Acanthomorphata</taxon>
        <taxon>Zeiogadaria</taxon>
        <taxon>Gadariae</taxon>
        <taxon>Gadiformes</taxon>
        <taxon>Gadoidei</taxon>
        <taxon>Merlucciidae</taxon>
        <taxon>Merluccius</taxon>
    </lineage>
</organism>
<dbReference type="SMR" id="P86771"/>
<dbReference type="iPTMnet" id="P86771"/>
<dbReference type="GO" id="GO:0005737">
    <property type="term" value="C:cytoplasm"/>
    <property type="evidence" value="ECO:0007669"/>
    <property type="project" value="TreeGrafter"/>
</dbReference>
<dbReference type="GO" id="GO:0005509">
    <property type="term" value="F:calcium ion binding"/>
    <property type="evidence" value="ECO:0007669"/>
    <property type="project" value="InterPro"/>
</dbReference>
<dbReference type="CDD" id="cd16255">
    <property type="entry name" value="EFh_parvalbumin_beta"/>
    <property type="match status" value="1"/>
</dbReference>
<dbReference type="FunFam" id="1.10.238.10:FF:000060">
    <property type="entry name" value="Parvalbumin, thymic"/>
    <property type="match status" value="1"/>
</dbReference>
<dbReference type="Gene3D" id="1.10.238.10">
    <property type="entry name" value="EF-hand"/>
    <property type="match status" value="1"/>
</dbReference>
<dbReference type="InterPro" id="IPR011992">
    <property type="entry name" value="EF-hand-dom_pair"/>
</dbReference>
<dbReference type="InterPro" id="IPR018247">
    <property type="entry name" value="EF_Hand_1_Ca_BS"/>
</dbReference>
<dbReference type="InterPro" id="IPR002048">
    <property type="entry name" value="EF_hand_dom"/>
</dbReference>
<dbReference type="InterPro" id="IPR008080">
    <property type="entry name" value="Parvalbumin"/>
</dbReference>
<dbReference type="PANTHER" id="PTHR11653:SF12">
    <property type="entry name" value="PARVALBUMIN"/>
    <property type="match status" value="1"/>
</dbReference>
<dbReference type="PANTHER" id="PTHR11653">
    <property type="entry name" value="PARVALBUMIN ALPHA"/>
    <property type="match status" value="1"/>
</dbReference>
<dbReference type="Pfam" id="PF13499">
    <property type="entry name" value="EF-hand_7"/>
    <property type="match status" value="1"/>
</dbReference>
<dbReference type="PRINTS" id="PR01697">
    <property type="entry name" value="PARVALBUMIN"/>
</dbReference>
<dbReference type="SMART" id="SM00054">
    <property type="entry name" value="EFh"/>
    <property type="match status" value="2"/>
</dbReference>
<dbReference type="SUPFAM" id="SSF47473">
    <property type="entry name" value="EF-hand"/>
    <property type="match status" value="1"/>
</dbReference>
<dbReference type="PROSITE" id="PS00018">
    <property type="entry name" value="EF_HAND_1"/>
    <property type="match status" value="2"/>
</dbReference>
<dbReference type="PROSITE" id="PS50222">
    <property type="entry name" value="EF_HAND_2"/>
    <property type="match status" value="2"/>
</dbReference>
<sequence>AFSGILAEADIAAALKACEAAGTFNYKAFFAKVGLTGKSADDIKKAFFVIDQDKSGFIEEDELKLFLQVFSAGARALTDAETKAFLKAGDSDGDGAIGVDEWAVLVKA</sequence>
<name>PRVB2_MERPO</name>
<accession>P86771</accession>
<keyword id="KW-0007">Acetylation</keyword>
<keyword id="KW-0020">Allergen</keyword>
<keyword id="KW-0106">Calcium</keyword>
<keyword id="KW-0903">Direct protein sequencing</keyword>
<keyword id="KW-0479">Metal-binding</keyword>
<keyword id="KW-0514">Muscle protein</keyword>
<keyword id="KW-0677">Repeat</keyword>
<feature type="chain" id="PRO_0000399432" description="Parvalbumin beta 2">
    <location>
        <begin position="1"/>
        <end position="108"/>
    </location>
</feature>
<feature type="domain" description="EF-hand 1" evidence="5">
    <location>
        <begin position="38"/>
        <end position="73"/>
    </location>
</feature>
<feature type="domain" description="EF-hand 2" evidence="5">
    <location>
        <begin position="77"/>
        <end position="108"/>
    </location>
</feature>
<feature type="binding site" evidence="1 5">
    <location>
        <position position="51"/>
    </location>
    <ligand>
        <name>Ca(2+)</name>
        <dbReference type="ChEBI" id="CHEBI:29108"/>
        <label>1</label>
    </ligand>
</feature>
<feature type="binding site" evidence="1 5">
    <location>
        <position position="53"/>
    </location>
    <ligand>
        <name>Ca(2+)</name>
        <dbReference type="ChEBI" id="CHEBI:29108"/>
        <label>1</label>
    </ligand>
</feature>
<feature type="binding site" evidence="1 5">
    <location>
        <position position="55"/>
    </location>
    <ligand>
        <name>Ca(2+)</name>
        <dbReference type="ChEBI" id="CHEBI:29108"/>
        <label>1</label>
    </ligand>
</feature>
<feature type="binding site" evidence="1">
    <location>
        <position position="57"/>
    </location>
    <ligand>
        <name>Ca(2+)</name>
        <dbReference type="ChEBI" id="CHEBI:29108"/>
        <label>1</label>
    </ligand>
</feature>
<feature type="binding site" evidence="1">
    <location>
        <position position="59"/>
    </location>
    <ligand>
        <name>Ca(2+)</name>
        <dbReference type="ChEBI" id="CHEBI:29108"/>
        <label>1</label>
    </ligand>
</feature>
<feature type="binding site" evidence="1 5">
    <location>
        <position position="62"/>
    </location>
    <ligand>
        <name>Ca(2+)</name>
        <dbReference type="ChEBI" id="CHEBI:29108"/>
        <label>1</label>
    </ligand>
</feature>
<feature type="binding site" evidence="1 5">
    <location>
        <position position="90"/>
    </location>
    <ligand>
        <name>Ca(2+)</name>
        <dbReference type="ChEBI" id="CHEBI:29108"/>
        <label>2</label>
    </ligand>
</feature>
<feature type="binding site" evidence="1 5">
    <location>
        <position position="92"/>
    </location>
    <ligand>
        <name>Ca(2+)</name>
        <dbReference type="ChEBI" id="CHEBI:29108"/>
        <label>2</label>
    </ligand>
</feature>
<feature type="binding site" evidence="1 5">
    <location>
        <position position="94"/>
    </location>
    <ligand>
        <name>Ca(2+)</name>
        <dbReference type="ChEBI" id="CHEBI:29108"/>
        <label>2</label>
    </ligand>
</feature>
<feature type="binding site" evidence="1">
    <location>
        <position position="96"/>
    </location>
    <ligand>
        <name>Ca(2+)</name>
        <dbReference type="ChEBI" id="CHEBI:29108"/>
        <label>2</label>
    </ligand>
</feature>
<feature type="binding site" evidence="1 5">
    <location>
        <position position="101"/>
    </location>
    <ligand>
        <name>Ca(2+)</name>
        <dbReference type="ChEBI" id="CHEBI:29108"/>
        <label>2</label>
    </ligand>
</feature>
<feature type="modified residue" description="N-acetylalanine" evidence="6">
    <location>
        <position position="1"/>
    </location>
</feature>
<feature type="unsure residue" description="I or L" evidence="6">
    <location>
        <position position="5"/>
    </location>
</feature>
<feature type="unsure residue" description="L or I" evidence="6">
    <location>
        <position position="6"/>
    </location>
</feature>
<feature type="unsure residue" description="I or L" evidence="6">
    <location>
        <position position="11"/>
    </location>
</feature>
<feature type="unsure residue" description="L or I" evidence="6">
    <location>
        <position position="15"/>
    </location>
</feature>
<feature type="unsure residue" description="K or Q" evidence="6">
    <location>
        <position position="16"/>
    </location>
</feature>
<feature type="unsure residue" description="K or Q" evidence="6">
    <location>
        <position position="27"/>
    </location>
</feature>
<feature type="unsure residue" description="K or Q" evidence="6">
    <location>
        <position position="32"/>
    </location>
</feature>
<feature type="unsure residue" description="L or I" evidence="6">
    <location>
        <position position="35"/>
    </location>
</feature>
<feature type="unsure residue" description="K or Q" evidence="6">
    <location>
        <position position="38"/>
    </location>
</feature>
<feature type="unsure residue" description="I or L" evidence="6">
    <location>
        <position position="43"/>
    </location>
</feature>
<feature type="unsure residue" description="K or Q" evidence="6">
    <location>
        <position position="44"/>
    </location>
</feature>
<feature type="unsure residue" description="K or Q" evidence="6">
    <location>
        <position position="45"/>
    </location>
</feature>
<feature type="unsure residue" description="I or L" evidence="6">
    <location>
        <position position="50"/>
    </location>
</feature>
<feature type="unsure residue" description="Q or K" evidence="6">
    <location>
        <position position="52"/>
    </location>
</feature>
<feature type="unsure residue" description="K or Q" evidence="6">
    <location>
        <position position="54"/>
    </location>
</feature>
<feature type="unsure residue" description="I or L" evidence="6">
    <location>
        <position position="58"/>
    </location>
</feature>
<feature type="unsure residue" description="L or I" evidence="6">
    <location>
        <position position="63"/>
    </location>
</feature>
<feature type="unsure residue" description="K or Q" evidence="6">
    <location>
        <position position="64"/>
    </location>
</feature>
<feature type="unsure residue" description="L or I" evidence="6">
    <location>
        <position position="65"/>
    </location>
</feature>
<feature type="unsure residue" description="L or I" evidence="6">
    <location>
        <position position="67"/>
    </location>
</feature>
<feature type="unsure residue" description="Q or K" evidence="6">
    <location>
        <position position="68"/>
    </location>
</feature>
<feature type="unsure residue" description="L or I" evidence="6">
    <location>
        <position position="77"/>
    </location>
</feature>
<feature type="unsure residue" description="K or Q" evidence="6">
    <location>
        <position position="83"/>
    </location>
</feature>
<feature type="unsure residue" description="L or I" evidence="6">
    <location>
        <position position="86"/>
    </location>
</feature>
<feature type="unsure residue" description="K or Q" evidence="6">
    <location>
        <position position="87"/>
    </location>
</feature>
<feature type="unsure residue" description="I or L" evidence="6">
    <location>
        <position position="97"/>
    </location>
</feature>
<feature type="unsure residue" description="L or I" evidence="6">
    <location>
        <position position="105"/>
    </location>
</feature>
<feature type="unsure residue" description="K or Q" evidence="6">
    <location>
        <position position="107"/>
    </location>
</feature>
<proteinExistence type="evidence at protein level"/>
<protein>
    <recommendedName>
        <fullName evidence="7">Parvalbumin beta 2</fullName>
    </recommendedName>
</protein>
<reference evidence="8" key="1">
    <citation type="journal article" date="2010" name="J. Proteome Res.">
        <title>Extensive de novo sequencing of new parvalbumin isoforms using a novel combination of bottom-up proteomics, accurate molecular mass measurement by FTICR-MS, and selected MS/MS ion monitoring.</title>
        <authorList>
            <person name="Carrera M."/>
            <person name="Canas B."/>
            <person name="Vazquez J."/>
            <person name="Gallardo J.M."/>
        </authorList>
    </citation>
    <scope>PROTEIN SEQUENCE</scope>
    <scope>MASS SPECTROMETRY</scope>
    <scope>ACETYLATION AT ALA-1</scope>
    <source>
        <tissue evidence="6">Muscle</tissue>
    </source>
</reference>